<feature type="chain" id="PRO_1000132064" description="5-oxoprolinase subunit A">
    <location>
        <begin position="1"/>
        <end position="252"/>
    </location>
</feature>
<proteinExistence type="inferred from homology"/>
<keyword id="KW-0067">ATP-binding</keyword>
<keyword id="KW-0378">Hydrolase</keyword>
<keyword id="KW-0547">Nucleotide-binding</keyword>
<keyword id="KW-1185">Reference proteome</keyword>
<reference key="1">
    <citation type="journal article" date="2008" name="Genome Res.">
        <title>Insights from the complete genome sequence of Mycobacterium marinum on the evolution of Mycobacterium tuberculosis.</title>
        <authorList>
            <person name="Stinear T.P."/>
            <person name="Seemann T."/>
            <person name="Harrison P.F."/>
            <person name="Jenkin G.A."/>
            <person name="Davies J.K."/>
            <person name="Johnson P.D."/>
            <person name="Abdellah Z."/>
            <person name="Arrowsmith C."/>
            <person name="Chillingworth T."/>
            <person name="Churcher C."/>
            <person name="Clarke K."/>
            <person name="Cronin A."/>
            <person name="Davis P."/>
            <person name="Goodhead I."/>
            <person name="Holroyd N."/>
            <person name="Jagels K."/>
            <person name="Lord A."/>
            <person name="Moule S."/>
            <person name="Mungall K."/>
            <person name="Norbertczak H."/>
            <person name="Quail M.A."/>
            <person name="Rabbinowitsch E."/>
            <person name="Walker D."/>
            <person name="White B."/>
            <person name="Whitehead S."/>
            <person name="Small P.L."/>
            <person name="Brosch R."/>
            <person name="Ramakrishnan L."/>
            <person name="Fischbach M.A."/>
            <person name="Parkhill J."/>
            <person name="Cole S.T."/>
        </authorList>
    </citation>
    <scope>NUCLEOTIDE SEQUENCE [LARGE SCALE GENOMIC DNA]</scope>
    <source>
        <strain>ATCC BAA-535 / M</strain>
    </source>
</reference>
<name>PXPA_MYCMM</name>
<dbReference type="EC" id="3.5.2.9" evidence="1"/>
<dbReference type="EMBL" id="CP000854">
    <property type="protein sequence ID" value="ACC43480.1"/>
    <property type="molecule type" value="Genomic_DNA"/>
</dbReference>
<dbReference type="RefSeq" id="WP_012396598.1">
    <property type="nucleotide sequence ID" value="NC_010612.1"/>
</dbReference>
<dbReference type="SMR" id="B2HJ17"/>
<dbReference type="STRING" id="216594.MMAR_5076"/>
<dbReference type="KEGG" id="mmi:MMAR_5076"/>
<dbReference type="eggNOG" id="COG1540">
    <property type="taxonomic scope" value="Bacteria"/>
</dbReference>
<dbReference type="HOGENOM" id="CLU_069535_0_0_11"/>
<dbReference type="OrthoDB" id="9773478at2"/>
<dbReference type="Proteomes" id="UP000001190">
    <property type="component" value="Chromosome"/>
</dbReference>
<dbReference type="GO" id="GO:0017168">
    <property type="term" value="F:5-oxoprolinase (ATP-hydrolyzing) activity"/>
    <property type="evidence" value="ECO:0007669"/>
    <property type="project" value="UniProtKB-UniRule"/>
</dbReference>
<dbReference type="GO" id="GO:0005524">
    <property type="term" value="F:ATP binding"/>
    <property type="evidence" value="ECO:0007669"/>
    <property type="project" value="UniProtKB-UniRule"/>
</dbReference>
<dbReference type="GO" id="GO:0005975">
    <property type="term" value="P:carbohydrate metabolic process"/>
    <property type="evidence" value="ECO:0007669"/>
    <property type="project" value="InterPro"/>
</dbReference>
<dbReference type="CDD" id="cd10787">
    <property type="entry name" value="LamB_YcsF_like"/>
    <property type="match status" value="1"/>
</dbReference>
<dbReference type="Gene3D" id="3.20.20.370">
    <property type="entry name" value="Glycoside hydrolase/deacetylase"/>
    <property type="match status" value="1"/>
</dbReference>
<dbReference type="HAMAP" id="MF_00691">
    <property type="entry name" value="PxpA"/>
    <property type="match status" value="1"/>
</dbReference>
<dbReference type="InterPro" id="IPR011330">
    <property type="entry name" value="Glyco_hydro/deAcase_b/a-brl"/>
</dbReference>
<dbReference type="InterPro" id="IPR005501">
    <property type="entry name" value="LamB/YcsF/PxpA-like"/>
</dbReference>
<dbReference type="NCBIfam" id="NF003814">
    <property type="entry name" value="PRK05406.1-3"/>
    <property type="match status" value="1"/>
</dbReference>
<dbReference type="NCBIfam" id="NF003816">
    <property type="entry name" value="PRK05406.1-5"/>
    <property type="match status" value="1"/>
</dbReference>
<dbReference type="PANTHER" id="PTHR30292:SF0">
    <property type="entry name" value="5-OXOPROLINASE SUBUNIT A"/>
    <property type="match status" value="1"/>
</dbReference>
<dbReference type="PANTHER" id="PTHR30292">
    <property type="entry name" value="UNCHARACTERIZED PROTEIN YBGL-RELATED"/>
    <property type="match status" value="1"/>
</dbReference>
<dbReference type="Pfam" id="PF03746">
    <property type="entry name" value="LamB_YcsF"/>
    <property type="match status" value="1"/>
</dbReference>
<dbReference type="SUPFAM" id="SSF88713">
    <property type="entry name" value="Glycoside hydrolase/deacetylase"/>
    <property type="match status" value="1"/>
</dbReference>
<sequence>MPYIDLNADLGEGFGIWQLGDDDAMLGIVTSANVACGFHAGEPAGLLRVCRAAAERGVRIGAQVGYRDLAGFGRRFIDVDPEDLVAEVVYQIGALQAIAQSCGSTVSYVKPHGALYNTIVTHRDQAAAVAEAVQMVDATLPVLGMTGSVFFQQATDLGLRTVAEAFADRAYRSDGQLVSRREHGAVLADAAAIAQRAVSMVASGKVTAVDGTQVPITMESICVHGDSPGAVQIATAVRDRLTAAGNEIRAFC</sequence>
<gene>
    <name evidence="1" type="primary">pxpA</name>
    <name type="ordered locus">MMAR_5076</name>
</gene>
<protein>
    <recommendedName>
        <fullName evidence="1">5-oxoprolinase subunit A</fullName>
        <shortName evidence="1">5-OPase subunit A</shortName>
        <ecNumber evidence="1">3.5.2.9</ecNumber>
    </recommendedName>
    <alternativeName>
        <fullName evidence="1">5-oxoprolinase (ATP-hydrolyzing) subunit A</fullName>
    </alternativeName>
</protein>
<comment type="function">
    <text evidence="1">Catalyzes the cleavage of 5-oxoproline to form L-glutamate coupled to the hydrolysis of ATP to ADP and inorganic phosphate.</text>
</comment>
<comment type="catalytic activity">
    <reaction evidence="1">
        <text>5-oxo-L-proline + ATP + 2 H2O = L-glutamate + ADP + phosphate + H(+)</text>
        <dbReference type="Rhea" id="RHEA:10348"/>
        <dbReference type="ChEBI" id="CHEBI:15377"/>
        <dbReference type="ChEBI" id="CHEBI:15378"/>
        <dbReference type="ChEBI" id="CHEBI:29985"/>
        <dbReference type="ChEBI" id="CHEBI:30616"/>
        <dbReference type="ChEBI" id="CHEBI:43474"/>
        <dbReference type="ChEBI" id="CHEBI:58402"/>
        <dbReference type="ChEBI" id="CHEBI:456216"/>
        <dbReference type="EC" id="3.5.2.9"/>
    </reaction>
</comment>
<comment type="subunit">
    <text evidence="1">Forms a complex composed of PxpA, PxpB and PxpC.</text>
</comment>
<comment type="similarity">
    <text evidence="1">Belongs to the LamB/PxpA family.</text>
</comment>
<accession>B2HJ17</accession>
<organism>
    <name type="scientific">Mycobacterium marinum (strain ATCC BAA-535 / M)</name>
    <dbReference type="NCBI Taxonomy" id="216594"/>
    <lineage>
        <taxon>Bacteria</taxon>
        <taxon>Bacillati</taxon>
        <taxon>Actinomycetota</taxon>
        <taxon>Actinomycetes</taxon>
        <taxon>Mycobacteriales</taxon>
        <taxon>Mycobacteriaceae</taxon>
        <taxon>Mycobacterium</taxon>
        <taxon>Mycobacterium ulcerans group</taxon>
    </lineage>
</organism>
<evidence type="ECO:0000255" key="1">
    <source>
        <dbReference type="HAMAP-Rule" id="MF_00691"/>
    </source>
</evidence>